<comment type="function">
    <text evidence="5">Acts redundantly with DA1 and DAR2 to regulate endoreduplication during leaf development. Together with DA1 and DAR2, modulates the protein stability of the transcription factors TCP14 and TCP15, which repress endoreduplication by directly regulating the expression of cell-cycle genes.</text>
</comment>
<comment type="subunit">
    <text evidence="5">Interacts with ubiquitin, TCP14 and TCP15.</text>
</comment>
<comment type="developmental stage">
    <text evidence="5">Highly expressed during early stages leaf development, and expression decreases at the later stages of leaf development.</text>
</comment>
<comment type="domain">
    <text evidence="9">The UIM domains bind molecules modified by monoubiquitin or ubiquitin chains and promote coupled monoubiquitination.</text>
</comment>
<comment type="PTM">
    <text evidence="6">Polyubiquitinated by DA2.</text>
</comment>
<comment type="disruption phenotype">
    <text evidence="4">No visible phenotype.</text>
</comment>
<comment type="sequence caution" evidence="8">
    <conflict type="erroneous gene model prediction">
        <sequence resource="EMBL-CDS" id="CAB16816"/>
    </conflict>
</comment>
<comment type="sequence caution" evidence="8">
    <conflict type="frameshift">
        <sequence resource="EMBL-CDS" id="CAB16816"/>
    </conflict>
</comment>
<comment type="sequence caution" evidence="8">
    <conflict type="erroneous gene model prediction">
        <sequence resource="EMBL-CDS" id="CAB80352"/>
    </conflict>
</comment>
<comment type="sequence caution" evidence="8">
    <conflict type="frameshift">
        <sequence resource="EMBL-CDS" id="CAB80352"/>
    </conflict>
</comment>
<proteinExistence type="evidence at protein level"/>
<gene>
    <name evidence="7" type="primary">DAR1</name>
    <name type="ordered locus">At4g36860</name>
    <name type="ORF">AP22.33</name>
    <name type="ORF">C7A10.500</name>
</gene>
<evidence type="ECO:0000255" key="1">
    <source>
        <dbReference type="PROSITE-ProRule" id="PRU00125"/>
    </source>
</evidence>
<evidence type="ECO:0000255" key="2">
    <source>
        <dbReference type="PROSITE-ProRule" id="PRU00213"/>
    </source>
</evidence>
<evidence type="ECO:0000256" key="3">
    <source>
        <dbReference type="SAM" id="MobiDB-lite"/>
    </source>
</evidence>
<evidence type="ECO:0000269" key="4">
    <source>
    </source>
</evidence>
<evidence type="ECO:0000269" key="5">
    <source>
    </source>
</evidence>
<evidence type="ECO:0000269" key="6">
    <source>
    </source>
</evidence>
<evidence type="ECO:0000303" key="7">
    <source>
    </source>
</evidence>
<evidence type="ECO:0000305" key="8"/>
<evidence type="ECO:0000305" key="9">
    <source>
    </source>
</evidence>
<evidence type="ECO:0007744" key="10">
    <source>
    </source>
</evidence>
<protein>
    <recommendedName>
        <fullName evidence="7">Protein DA1-related 1</fullName>
    </recommendedName>
</protein>
<name>DAR1_ARATH</name>
<reference key="1">
    <citation type="journal article" date="1998" name="Nature">
        <title>Analysis of 1.9 Mb of contiguous sequence from chromosome 4 of Arabidopsis thaliana.</title>
        <authorList>
            <person name="Bevan M."/>
            <person name="Bancroft I."/>
            <person name="Bent E."/>
            <person name="Love K."/>
            <person name="Goodman H.M."/>
            <person name="Dean C."/>
            <person name="Bergkamp R."/>
            <person name="Dirkse W."/>
            <person name="van Staveren M."/>
            <person name="Stiekema W."/>
            <person name="Drost L."/>
            <person name="Ridley P."/>
            <person name="Hudson S.-A."/>
            <person name="Patel K."/>
            <person name="Murphy G."/>
            <person name="Piffanelli P."/>
            <person name="Wedler H."/>
            <person name="Wedler E."/>
            <person name="Wambutt R."/>
            <person name="Weitzenegger T."/>
            <person name="Pohl T."/>
            <person name="Terryn N."/>
            <person name="Gielen J."/>
            <person name="Villarroel R."/>
            <person name="De Clercq R."/>
            <person name="van Montagu M."/>
            <person name="Lecharny A."/>
            <person name="Aubourg S."/>
            <person name="Gy I."/>
            <person name="Kreis M."/>
            <person name="Lao N."/>
            <person name="Kavanagh T."/>
            <person name="Hempel S."/>
            <person name="Kotter P."/>
            <person name="Entian K.-D."/>
            <person name="Rieger M."/>
            <person name="Schaefer M."/>
            <person name="Funk B."/>
            <person name="Mueller-Auer S."/>
            <person name="Silvey M."/>
            <person name="James R."/>
            <person name="Monfort A."/>
            <person name="Pons A."/>
            <person name="Puigdomenech P."/>
            <person name="Douka A."/>
            <person name="Voukelatou E."/>
            <person name="Milioni D."/>
            <person name="Hatzopoulos P."/>
            <person name="Piravandi E."/>
            <person name="Obermaier B."/>
            <person name="Hilbert H."/>
            <person name="Duesterhoeft A."/>
            <person name="Moores T."/>
            <person name="Jones J.D.G."/>
            <person name="Eneva T."/>
            <person name="Palme K."/>
            <person name="Benes V."/>
            <person name="Rechmann S."/>
            <person name="Ansorge W."/>
            <person name="Cooke R."/>
            <person name="Berger C."/>
            <person name="Delseny M."/>
            <person name="Voet M."/>
            <person name="Volckaert G."/>
            <person name="Mewes H.-W."/>
            <person name="Klosterman S."/>
            <person name="Schueller C."/>
            <person name="Chalwatzis N."/>
        </authorList>
    </citation>
    <scope>NUCLEOTIDE SEQUENCE [LARGE SCALE GENOMIC DNA]</scope>
    <source>
        <strain>cv. Columbia</strain>
    </source>
</reference>
<reference key="2">
    <citation type="journal article" date="1999" name="Nature">
        <title>Sequence and analysis of chromosome 4 of the plant Arabidopsis thaliana.</title>
        <authorList>
            <person name="Mayer K.F.X."/>
            <person name="Schueller C."/>
            <person name="Wambutt R."/>
            <person name="Murphy G."/>
            <person name="Volckaert G."/>
            <person name="Pohl T."/>
            <person name="Duesterhoeft A."/>
            <person name="Stiekema W."/>
            <person name="Entian K.-D."/>
            <person name="Terryn N."/>
            <person name="Harris B."/>
            <person name="Ansorge W."/>
            <person name="Brandt P."/>
            <person name="Grivell L.A."/>
            <person name="Rieger M."/>
            <person name="Weichselgartner M."/>
            <person name="de Simone V."/>
            <person name="Obermaier B."/>
            <person name="Mache R."/>
            <person name="Mueller M."/>
            <person name="Kreis M."/>
            <person name="Delseny M."/>
            <person name="Puigdomenech P."/>
            <person name="Watson M."/>
            <person name="Schmidtheini T."/>
            <person name="Reichert B."/>
            <person name="Portetelle D."/>
            <person name="Perez-Alonso M."/>
            <person name="Boutry M."/>
            <person name="Bancroft I."/>
            <person name="Vos P."/>
            <person name="Hoheisel J."/>
            <person name="Zimmermann W."/>
            <person name="Wedler H."/>
            <person name="Ridley P."/>
            <person name="Langham S.-A."/>
            <person name="McCullagh B."/>
            <person name="Bilham L."/>
            <person name="Robben J."/>
            <person name="van der Schueren J."/>
            <person name="Grymonprez B."/>
            <person name="Chuang Y.-J."/>
            <person name="Vandenbussche F."/>
            <person name="Braeken M."/>
            <person name="Weltjens I."/>
            <person name="Voet M."/>
            <person name="Bastiaens I."/>
            <person name="Aert R."/>
            <person name="Defoor E."/>
            <person name="Weitzenegger T."/>
            <person name="Bothe G."/>
            <person name="Ramsperger U."/>
            <person name="Hilbert H."/>
            <person name="Braun M."/>
            <person name="Holzer E."/>
            <person name="Brandt A."/>
            <person name="Peters S."/>
            <person name="van Staveren M."/>
            <person name="Dirkse W."/>
            <person name="Mooijman P."/>
            <person name="Klein Lankhorst R."/>
            <person name="Rose M."/>
            <person name="Hauf J."/>
            <person name="Koetter P."/>
            <person name="Berneiser S."/>
            <person name="Hempel S."/>
            <person name="Feldpausch M."/>
            <person name="Lamberth S."/>
            <person name="Van den Daele H."/>
            <person name="De Keyser A."/>
            <person name="Buysshaert C."/>
            <person name="Gielen J."/>
            <person name="Villarroel R."/>
            <person name="De Clercq R."/>
            <person name="van Montagu M."/>
            <person name="Rogers J."/>
            <person name="Cronin A."/>
            <person name="Quail M.A."/>
            <person name="Bray-Allen S."/>
            <person name="Clark L."/>
            <person name="Doggett J."/>
            <person name="Hall S."/>
            <person name="Kay M."/>
            <person name="Lennard N."/>
            <person name="McLay K."/>
            <person name="Mayes R."/>
            <person name="Pettett A."/>
            <person name="Rajandream M.A."/>
            <person name="Lyne M."/>
            <person name="Benes V."/>
            <person name="Rechmann S."/>
            <person name="Borkova D."/>
            <person name="Bloecker H."/>
            <person name="Scharfe M."/>
            <person name="Grimm M."/>
            <person name="Loehnert T.-H."/>
            <person name="Dose S."/>
            <person name="de Haan M."/>
            <person name="Maarse A.C."/>
            <person name="Schaefer M."/>
            <person name="Mueller-Auer S."/>
            <person name="Gabel C."/>
            <person name="Fuchs M."/>
            <person name="Fartmann B."/>
            <person name="Granderath K."/>
            <person name="Dauner D."/>
            <person name="Herzl A."/>
            <person name="Neumann S."/>
            <person name="Argiriou A."/>
            <person name="Vitale D."/>
            <person name="Liguori R."/>
            <person name="Piravandi E."/>
            <person name="Massenet O."/>
            <person name="Quigley F."/>
            <person name="Clabauld G."/>
            <person name="Muendlein A."/>
            <person name="Felber R."/>
            <person name="Schnabl S."/>
            <person name="Hiller R."/>
            <person name="Schmidt W."/>
            <person name="Lecharny A."/>
            <person name="Aubourg S."/>
            <person name="Chefdor F."/>
            <person name="Cooke R."/>
            <person name="Berger C."/>
            <person name="Monfort A."/>
            <person name="Casacuberta E."/>
            <person name="Gibbons T."/>
            <person name="Weber N."/>
            <person name="Vandenbol M."/>
            <person name="Bargues M."/>
            <person name="Terol J."/>
            <person name="Torres A."/>
            <person name="Perez-Perez A."/>
            <person name="Purnelle B."/>
            <person name="Bent E."/>
            <person name="Johnson S."/>
            <person name="Tacon D."/>
            <person name="Jesse T."/>
            <person name="Heijnen L."/>
            <person name="Schwarz S."/>
            <person name="Scholler P."/>
            <person name="Heber S."/>
            <person name="Francs P."/>
            <person name="Bielke C."/>
            <person name="Frishman D."/>
            <person name="Haase D."/>
            <person name="Lemcke K."/>
            <person name="Mewes H.-W."/>
            <person name="Stocker S."/>
            <person name="Zaccaria P."/>
            <person name="Bevan M."/>
            <person name="Wilson R.K."/>
            <person name="de la Bastide M."/>
            <person name="Habermann K."/>
            <person name="Parnell L."/>
            <person name="Dedhia N."/>
            <person name="Gnoj L."/>
            <person name="Schutz K."/>
            <person name="Huang E."/>
            <person name="Spiegel L."/>
            <person name="Sekhon M."/>
            <person name="Murray J."/>
            <person name="Sheet P."/>
            <person name="Cordes M."/>
            <person name="Abu-Threideh J."/>
            <person name="Stoneking T."/>
            <person name="Kalicki J."/>
            <person name="Graves T."/>
            <person name="Harmon G."/>
            <person name="Edwards J."/>
            <person name="Latreille P."/>
            <person name="Courtney L."/>
            <person name="Cloud J."/>
            <person name="Abbott A."/>
            <person name="Scott K."/>
            <person name="Johnson D."/>
            <person name="Minx P."/>
            <person name="Bentley D."/>
            <person name="Fulton B."/>
            <person name="Miller N."/>
            <person name="Greco T."/>
            <person name="Kemp K."/>
            <person name="Kramer J."/>
            <person name="Fulton L."/>
            <person name="Mardis E."/>
            <person name="Dante M."/>
            <person name="Pepin K."/>
            <person name="Hillier L.W."/>
            <person name="Nelson J."/>
            <person name="Spieth J."/>
            <person name="Ryan E."/>
            <person name="Andrews S."/>
            <person name="Geisel C."/>
            <person name="Layman D."/>
            <person name="Du H."/>
            <person name="Ali J."/>
            <person name="Berghoff A."/>
            <person name="Jones K."/>
            <person name="Drone K."/>
            <person name="Cotton M."/>
            <person name="Joshu C."/>
            <person name="Antonoiu B."/>
            <person name="Zidanic M."/>
            <person name="Strong C."/>
            <person name="Sun H."/>
            <person name="Lamar B."/>
            <person name="Yordan C."/>
            <person name="Ma P."/>
            <person name="Zhong J."/>
            <person name="Preston R."/>
            <person name="Vil D."/>
            <person name="Shekher M."/>
            <person name="Matero A."/>
            <person name="Shah R."/>
            <person name="Swaby I.K."/>
            <person name="O'Shaughnessy A."/>
            <person name="Rodriguez M."/>
            <person name="Hoffman J."/>
            <person name="Till S."/>
            <person name="Granat S."/>
            <person name="Shohdy N."/>
            <person name="Hasegawa A."/>
            <person name="Hameed A."/>
            <person name="Lodhi M."/>
            <person name="Johnson A."/>
            <person name="Chen E."/>
            <person name="Marra M.A."/>
            <person name="Martienssen R."/>
            <person name="McCombie W.R."/>
        </authorList>
    </citation>
    <scope>NUCLEOTIDE SEQUENCE [LARGE SCALE GENOMIC DNA]</scope>
    <source>
        <strain>cv. Columbia</strain>
    </source>
</reference>
<reference key="3">
    <citation type="journal article" date="2017" name="Plant J.">
        <title>Araport11: a complete reannotation of the Arabidopsis thaliana reference genome.</title>
        <authorList>
            <person name="Cheng C.Y."/>
            <person name="Krishnakumar V."/>
            <person name="Chan A.P."/>
            <person name="Thibaud-Nissen F."/>
            <person name="Schobel S."/>
            <person name="Town C.D."/>
        </authorList>
    </citation>
    <scope>GENOME REANNOTATION</scope>
    <source>
        <strain>cv. Columbia</strain>
    </source>
</reference>
<reference key="4">
    <citation type="journal article" date="2003" name="Science">
        <title>Empirical analysis of transcriptional activity in the Arabidopsis genome.</title>
        <authorList>
            <person name="Yamada K."/>
            <person name="Lim J."/>
            <person name="Dale J.M."/>
            <person name="Chen H."/>
            <person name="Shinn P."/>
            <person name="Palm C.J."/>
            <person name="Southwick A.M."/>
            <person name="Wu H.C."/>
            <person name="Kim C.J."/>
            <person name="Nguyen M."/>
            <person name="Pham P.K."/>
            <person name="Cheuk R.F."/>
            <person name="Karlin-Newmann G."/>
            <person name="Liu S.X."/>
            <person name="Lam B."/>
            <person name="Sakano H."/>
            <person name="Wu T."/>
            <person name="Yu G."/>
            <person name="Miranda M."/>
            <person name="Quach H.L."/>
            <person name="Tripp M."/>
            <person name="Chang C.H."/>
            <person name="Lee J.M."/>
            <person name="Toriumi M.J."/>
            <person name="Chan M.M."/>
            <person name="Tang C.C."/>
            <person name="Onodera C.S."/>
            <person name="Deng J.M."/>
            <person name="Akiyama K."/>
            <person name="Ansari Y."/>
            <person name="Arakawa T."/>
            <person name="Banh J."/>
            <person name="Banno F."/>
            <person name="Bowser L."/>
            <person name="Brooks S.Y."/>
            <person name="Carninci P."/>
            <person name="Chao Q."/>
            <person name="Choy N."/>
            <person name="Enju A."/>
            <person name="Goldsmith A.D."/>
            <person name="Gurjal M."/>
            <person name="Hansen N.F."/>
            <person name="Hayashizaki Y."/>
            <person name="Johnson-Hopson C."/>
            <person name="Hsuan V.W."/>
            <person name="Iida K."/>
            <person name="Karnes M."/>
            <person name="Khan S."/>
            <person name="Koesema E."/>
            <person name="Ishida J."/>
            <person name="Jiang P.X."/>
            <person name="Jones T."/>
            <person name="Kawai J."/>
            <person name="Kamiya A."/>
            <person name="Meyers C."/>
            <person name="Nakajima M."/>
            <person name="Narusaka M."/>
            <person name="Seki M."/>
            <person name="Sakurai T."/>
            <person name="Satou M."/>
            <person name="Tamse R."/>
            <person name="Vaysberg M."/>
            <person name="Wallender E.K."/>
            <person name="Wong C."/>
            <person name="Yamamura Y."/>
            <person name="Yuan S."/>
            <person name="Shinozaki K."/>
            <person name="Davis R.W."/>
            <person name="Theologis A."/>
            <person name="Ecker J.R."/>
        </authorList>
    </citation>
    <scope>NUCLEOTIDE SEQUENCE [LARGE SCALE MRNA]</scope>
    <source>
        <strain>cv. Columbia</strain>
    </source>
</reference>
<reference key="5">
    <citation type="journal article" date="2008" name="Genes Dev.">
        <title>Control of final seed and organ size by the DA1 gene family in Arabidopsis thaliana.</title>
        <authorList>
            <person name="Li Y."/>
            <person name="Zheng L."/>
            <person name="Corke F."/>
            <person name="Smith C."/>
            <person name="Bevan M.W."/>
        </authorList>
    </citation>
    <scope>DISRUPTION PHENOTYPE</scope>
    <scope>GENE FAMILY</scope>
    <scope>NOMENCLATURE</scope>
</reference>
<reference key="6">
    <citation type="journal article" date="2009" name="J. Proteomics">
        <title>Phosphoproteomic analysis of nuclei-enriched fractions from Arabidopsis thaliana.</title>
        <authorList>
            <person name="Jones A.M.E."/>
            <person name="MacLean D."/>
            <person name="Studholme D.J."/>
            <person name="Serna-Sanz A."/>
            <person name="Andreasson E."/>
            <person name="Rathjen J.P."/>
            <person name="Peck S.C."/>
        </authorList>
    </citation>
    <scope>PHOSPHORYLATION [LARGE SCALE ANALYSIS] AT SER-166</scope>
    <scope>IDENTIFICATION BY MASS SPECTROMETRY [LARGE SCALE ANALYSIS]</scope>
    <source>
        <strain>cv. Columbia</strain>
    </source>
</reference>
<reference key="7">
    <citation type="journal article" date="2015" name="Plant Cell">
        <title>The ubiquitin receptors DA1, DAR1, and DAR2 redundantly regulate endoreduplication by modulating the stability of TCP14/15 in Arabidopsis.</title>
        <authorList>
            <person name="Peng Y."/>
            <person name="Chen L."/>
            <person name="Lu Y."/>
            <person name="Wu Y."/>
            <person name="Dumenil J."/>
            <person name="Zhu Z."/>
            <person name="Bevan M.W."/>
            <person name="Li Y."/>
        </authorList>
    </citation>
    <scope>FUNCTION</scope>
    <scope>INTERACTION WITH UBIQUITIN; TCP14 AND TCP15</scope>
    <scope>DEVELOPMENTAL STAGE</scope>
    <scope>DOMAIN</scope>
</reference>
<reference key="8">
    <citation type="journal article" date="2017" name="Genes Dev.">
        <title>Ubiquitylation activates a peptidase that promotes cleavage and destabilization of its activating E3 ligases and diverse growth regulatory proteins to limit cell proliferation in Arabidopsis.</title>
        <authorList>
            <person name="Dong H."/>
            <person name="Dumenil J."/>
            <person name="Lu F.H."/>
            <person name="Na L."/>
            <person name="Vanhaeren H."/>
            <person name="Naumann C."/>
            <person name="Klecker M."/>
            <person name="Prior R."/>
            <person name="Smith C."/>
            <person name="McKenzie N."/>
            <person name="Saalbach G."/>
            <person name="Chen L."/>
            <person name="Xia T."/>
            <person name="Gonzalez N."/>
            <person name="Seguela M."/>
            <person name="Inze D."/>
            <person name="Dissmeyer N."/>
            <person name="Li Y."/>
            <person name="Bevan M.W."/>
        </authorList>
    </citation>
    <scope>UBIQUITINATION</scope>
</reference>
<sequence length="553" mass="63308">MGWLTKILKGSSHKFSDGQCNGRYREDRNLEGPRYSAEGSDFDKEEIECAIALSLSEQEHVIPQDDKGKKIIEYKSETEEDDDDDEDEDEEYMRAQLEAAEEEERRVAQAQIEEEEKRRAEAQLEETEKLLAKARLEEEEMRRSKAQLEEDELLAKALQESMNVGSPPRYDPGNILQPYPFLIPSSHRICVGCQAEIGHGRFLSCMGGVWHPECFCCNACDKPIIDYEFSMSGNRPYHKLCYKEQHHPKCDVCHNFIPTNPAGLIEYRAHPFWMQKYCPSHERDGTPRCCSCERMEPKDTKYLILDDGRKLCLECLDSAIMDTHECQPLYLEIREFYEGLHMKVEQQIPMLLVERSALNEAMEGEKHGHHHLPETRGLCLSEEQTVTTVLRRPRIGAGYKLIDMITEPCRLIRRCEVTAILILYGLPRLLTGSILAHEMMHAWLRLNGYPNLRPEVEEGICQVLAHMWLESETYAGSTLVDIASSSSSAVVSASSKKGERSDFEKKLGEFFKHQIESDSSSAYGDGFRQGNQAVLKHGLRRTLDHIRLTGTFP</sequence>
<keyword id="KW-0440">LIM domain</keyword>
<keyword id="KW-0479">Metal-binding</keyword>
<keyword id="KW-0597">Phosphoprotein</keyword>
<keyword id="KW-1185">Reference proteome</keyword>
<keyword id="KW-0677">Repeat</keyword>
<keyword id="KW-0832">Ubl conjugation</keyword>
<keyword id="KW-0862">Zinc</keyword>
<organism>
    <name type="scientific">Arabidopsis thaliana</name>
    <name type="common">Mouse-ear cress</name>
    <dbReference type="NCBI Taxonomy" id="3702"/>
    <lineage>
        <taxon>Eukaryota</taxon>
        <taxon>Viridiplantae</taxon>
        <taxon>Streptophyta</taxon>
        <taxon>Embryophyta</taxon>
        <taxon>Tracheophyta</taxon>
        <taxon>Spermatophyta</taxon>
        <taxon>Magnoliopsida</taxon>
        <taxon>eudicotyledons</taxon>
        <taxon>Gunneridae</taxon>
        <taxon>Pentapetalae</taxon>
        <taxon>rosids</taxon>
        <taxon>malvids</taxon>
        <taxon>Brassicales</taxon>
        <taxon>Brassicaceae</taxon>
        <taxon>Camelineae</taxon>
        <taxon>Arabidopsis</taxon>
    </lineage>
</organism>
<accession>Q8W4F0</accession>
<accession>O23197</accession>
<dbReference type="EMBL" id="Z99708">
    <property type="protein sequence ID" value="CAB16816.1"/>
    <property type="status" value="ALT_SEQ"/>
    <property type="molecule type" value="Genomic_DNA"/>
</dbReference>
<dbReference type="EMBL" id="AL161590">
    <property type="protein sequence ID" value="CAB80352.1"/>
    <property type="status" value="ALT_SEQ"/>
    <property type="molecule type" value="Genomic_DNA"/>
</dbReference>
<dbReference type="EMBL" id="CP002687">
    <property type="protein sequence ID" value="AEE86710.1"/>
    <property type="molecule type" value="Genomic_DNA"/>
</dbReference>
<dbReference type="EMBL" id="AY062599">
    <property type="protein sequence ID" value="AAL32677.1"/>
    <property type="molecule type" value="mRNA"/>
</dbReference>
<dbReference type="EMBL" id="AY114659">
    <property type="protein sequence ID" value="AAM47978.1"/>
    <property type="molecule type" value="mRNA"/>
</dbReference>
<dbReference type="PIR" id="C85435">
    <property type="entry name" value="C85435"/>
</dbReference>
<dbReference type="RefSeq" id="NP_195404.6">
    <property type="nucleotide sequence ID" value="NM_119850.7"/>
</dbReference>
<dbReference type="BioGRID" id="15120">
    <property type="interactions" value="7"/>
</dbReference>
<dbReference type="FunCoup" id="Q8W4F0">
    <property type="interactions" value="461"/>
</dbReference>
<dbReference type="IntAct" id="Q8W4F0">
    <property type="interactions" value="5"/>
</dbReference>
<dbReference type="STRING" id="3702.Q8W4F0"/>
<dbReference type="iPTMnet" id="Q8W4F0"/>
<dbReference type="PaxDb" id="3702-AT4G36860.1"/>
<dbReference type="EnsemblPlants" id="AT4G36860.1">
    <property type="protein sequence ID" value="AT4G36860.1"/>
    <property type="gene ID" value="AT4G36860"/>
</dbReference>
<dbReference type="GeneID" id="829839"/>
<dbReference type="Gramene" id="AT4G36860.1">
    <property type="protein sequence ID" value="AT4G36860.1"/>
    <property type="gene ID" value="AT4G36860"/>
</dbReference>
<dbReference type="KEGG" id="ath:AT4G36860"/>
<dbReference type="Araport" id="AT4G36860"/>
<dbReference type="TAIR" id="AT4G36860">
    <property type="gene designation" value="DAR1"/>
</dbReference>
<dbReference type="eggNOG" id="KOG1703">
    <property type="taxonomic scope" value="Eukaryota"/>
</dbReference>
<dbReference type="HOGENOM" id="CLU_015906_4_0_1"/>
<dbReference type="InParanoid" id="Q8W4F0"/>
<dbReference type="OMA" id="HEATHAW"/>
<dbReference type="PRO" id="PR:Q8W4F0"/>
<dbReference type="Proteomes" id="UP000006548">
    <property type="component" value="Chromosome 4"/>
</dbReference>
<dbReference type="ExpressionAtlas" id="Q8W4F0">
    <property type="expression patterns" value="baseline and differential"/>
</dbReference>
<dbReference type="GO" id="GO:0046872">
    <property type="term" value="F:metal ion binding"/>
    <property type="evidence" value="ECO:0007669"/>
    <property type="project" value="UniProtKB-KW"/>
</dbReference>
<dbReference type="GO" id="GO:0008233">
    <property type="term" value="F:peptidase activity"/>
    <property type="evidence" value="ECO:0000314"/>
    <property type="project" value="TAIR"/>
</dbReference>
<dbReference type="GO" id="GO:0043130">
    <property type="term" value="F:ubiquitin binding"/>
    <property type="evidence" value="ECO:0000314"/>
    <property type="project" value="TAIR"/>
</dbReference>
<dbReference type="GO" id="GO:0032875">
    <property type="term" value="P:regulation of DNA endoreduplication"/>
    <property type="evidence" value="ECO:0000315"/>
    <property type="project" value="UniProtKB"/>
</dbReference>
<dbReference type="CDD" id="cd09396">
    <property type="entry name" value="LIM_DA1"/>
    <property type="match status" value="1"/>
</dbReference>
<dbReference type="FunFam" id="2.10.110.10:FF:000078">
    <property type="entry name" value="Protein DA1-related 1"/>
    <property type="match status" value="1"/>
</dbReference>
<dbReference type="Gene3D" id="2.10.110.10">
    <property type="entry name" value="Cysteine Rich Protein"/>
    <property type="match status" value="1"/>
</dbReference>
<dbReference type="InterPro" id="IPR045218">
    <property type="entry name" value="DA1-like"/>
</dbReference>
<dbReference type="InterPro" id="IPR022087">
    <property type="entry name" value="DA1-like_dom"/>
</dbReference>
<dbReference type="InterPro" id="IPR003903">
    <property type="entry name" value="UIM_dom"/>
</dbReference>
<dbReference type="InterPro" id="IPR001781">
    <property type="entry name" value="Znf_LIM"/>
</dbReference>
<dbReference type="PANTHER" id="PTHR24209:SF25">
    <property type="entry name" value="PROTEIN DA1-RELATED 1"/>
    <property type="match status" value="1"/>
</dbReference>
<dbReference type="PANTHER" id="PTHR24209">
    <property type="entry name" value="PROTEIN DA1-RELATED 2"/>
    <property type="match status" value="1"/>
</dbReference>
<dbReference type="Pfam" id="PF12315">
    <property type="entry name" value="DA1-like"/>
    <property type="match status" value="1"/>
</dbReference>
<dbReference type="Pfam" id="PF00412">
    <property type="entry name" value="LIM"/>
    <property type="match status" value="1"/>
</dbReference>
<dbReference type="SMART" id="SM00132">
    <property type="entry name" value="LIM"/>
    <property type="match status" value="1"/>
</dbReference>
<dbReference type="SMART" id="SM00726">
    <property type="entry name" value="UIM"/>
    <property type="match status" value="3"/>
</dbReference>
<dbReference type="SUPFAM" id="SSF57716">
    <property type="entry name" value="Glucocorticoid receptor-like (DNA-binding domain)"/>
    <property type="match status" value="2"/>
</dbReference>
<dbReference type="PROSITE" id="PS00478">
    <property type="entry name" value="LIM_DOMAIN_1"/>
    <property type="match status" value="1"/>
</dbReference>
<dbReference type="PROSITE" id="PS50023">
    <property type="entry name" value="LIM_DOMAIN_2"/>
    <property type="match status" value="1"/>
</dbReference>
<dbReference type="PROSITE" id="PS50330">
    <property type="entry name" value="UIM"/>
    <property type="match status" value="3"/>
</dbReference>
<dbReference type="PROSITE" id="PS00142">
    <property type="entry name" value="ZINC_PROTEASE"/>
    <property type="match status" value="1"/>
</dbReference>
<feature type="chain" id="PRO_0000396936" description="Protein DA1-related 1">
    <location>
        <begin position="1"/>
        <end position="553"/>
    </location>
</feature>
<feature type="domain" description="UIM 1" evidence="2">
    <location>
        <begin position="42"/>
        <end position="61"/>
    </location>
</feature>
<feature type="domain" description="UIM 2" evidence="2">
    <location>
        <begin position="87"/>
        <end position="106"/>
    </location>
</feature>
<feature type="domain" description="UIM 3; degenerate" evidence="2">
    <location>
        <begin position="122"/>
        <end position="141"/>
    </location>
</feature>
<feature type="domain" description="UIM 4" evidence="2">
    <location>
        <begin position="149"/>
        <end position="168"/>
    </location>
</feature>
<feature type="domain" description="LIM zinc-binding" evidence="1">
    <location>
        <begin position="188"/>
        <end position="248"/>
    </location>
</feature>
<feature type="region of interest" description="Disordered" evidence="3">
    <location>
        <begin position="10"/>
        <end position="41"/>
    </location>
</feature>
<feature type="region of interest" description="Disordered" evidence="3">
    <location>
        <begin position="62"/>
        <end position="91"/>
    </location>
</feature>
<feature type="compositionally biased region" description="Basic and acidic residues" evidence="3">
    <location>
        <begin position="62"/>
        <end position="77"/>
    </location>
</feature>
<feature type="compositionally biased region" description="Acidic residues" evidence="3">
    <location>
        <begin position="78"/>
        <end position="91"/>
    </location>
</feature>
<feature type="modified residue" description="Phosphoserine" evidence="10">
    <location>
        <position position="166"/>
    </location>
</feature>
<feature type="sequence conflict" description="In Ref. 4; AAL32677/AAM47978." evidence="8" ref="4">
    <original>K</original>
    <variation>E</variation>
    <location>
        <position position="505"/>
    </location>
</feature>